<accession>B8FGT3</accession>
<name>ATPE_DESAL</name>
<organism>
    <name type="scientific">Desulfatibacillum aliphaticivorans</name>
    <dbReference type="NCBI Taxonomy" id="218208"/>
    <lineage>
        <taxon>Bacteria</taxon>
        <taxon>Pseudomonadati</taxon>
        <taxon>Thermodesulfobacteriota</taxon>
        <taxon>Desulfobacteria</taxon>
        <taxon>Desulfobacterales</taxon>
        <taxon>Desulfatibacillaceae</taxon>
        <taxon>Desulfatibacillum</taxon>
    </lineage>
</organism>
<dbReference type="EMBL" id="CP001322">
    <property type="protein sequence ID" value="ACL05313.1"/>
    <property type="molecule type" value="Genomic_DNA"/>
</dbReference>
<dbReference type="RefSeq" id="WP_015948370.1">
    <property type="nucleotide sequence ID" value="NC_011768.1"/>
</dbReference>
<dbReference type="SMR" id="B8FGT3"/>
<dbReference type="KEGG" id="dal:Dalk_3625"/>
<dbReference type="eggNOG" id="COG0355">
    <property type="taxonomic scope" value="Bacteria"/>
</dbReference>
<dbReference type="HOGENOM" id="CLU_084338_1_3_7"/>
<dbReference type="Proteomes" id="UP000000739">
    <property type="component" value="Chromosome"/>
</dbReference>
<dbReference type="GO" id="GO:0005886">
    <property type="term" value="C:plasma membrane"/>
    <property type="evidence" value="ECO:0007669"/>
    <property type="project" value="UniProtKB-SubCell"/>
</dbReference>
<dbReference type="GO" id="GO:0045259">
    <property type="term" value="C:proton-transporting ATP synthase complex"/>
    <property type="evidence" value="ECO:0007669"/>
    <property type="project" value="UniProtKB-KW"/>
</dbReference>
<dbReference type="GO" id="GO:0005524">
    <property type="term" value="F:ATP binding"/>
    <property type="evidence" value="ECO:0007669"/>
    <property type="project" value="UniProtKB-UniRule"/>
</dbReference>
<dbReference type="GO" id="GO:0046933">
    <property type="term" value="F:proton-transporting ATP synthase activity, rotational mechanism"/>
    <property type="evidence" value="ECO:0007669"/>
    <property type="project" value="UniProtKB-UniRule"/>
</dbReference>
<dbReference type="CDD" id="cd12152">
    <property type="entry name" value="F1-ATPase_delta"/>
    <property type="match status" value="1"/>
</dbReference>
<dbReference type="Gene3D" id="1.20.5.440">
    <property type="entry name" value="ATP synthase delta/epsilon subunit, C-terminal domain"/>
    <property type="match status" value="1"/>
</dbReference>
<dbReference type="Gene3D" id="2.60.15.10">
    <property type="entry name" value="F0F1 ATP synthase delta/epsilon subunit, N-terminal"/>
    <property type="match status" value="1"/>
</dbReference>
<dbReference type="HAMAP" id="MF_00530">
    <property type="entry name" value="ATP_synth_epsil_bac"/>
    <property type="match status" value="1"/>
</dbReference>
<dbReference type="InterPro" id="IPR036794">
    <property type="entry name" value="ATP_F1_dsu/esu_C_sf"/>
</dbReference>
<dbReference type="InterPro" id="IPR001469">
    <property type="entry name" value="ATP_synth_F1_dsu/esu"/>
</dbReference>
<dbReference type="InterPro" id="IPR020546">
    <property type="entry name" value="ATP_synth_F1_dsu/esu_N"/>
</dbReference>
<dbReference type="InterPro" id="IPR020547">
    <property type="entry name" value="ATP_synth_F1_esu_C"/>
</dbReference>
<dbReference type="InterPro" id="IPR036771">
    <property type="entry name" value="ATPsynth_dsu/esu_N"/>
</dbReference>
<dbReference type="NCBIfam" id="TIGR01216">
    <property type="entry name" value="ATP_synt_epsi"/>
    <property type="match status" value="1"/>
</dbReference>
<dbReference type="NCBIfam" id="NF009980">
    <property type="entry name" value="PRK13446.1"/>
    <property type="match status" value="1"/>
</dbReference>
<dbReference type="PANTHER" id="PTHR13822">
    <property type="entry name" value="ATP SYNTHASE DELTA/EPSILON CHAIN"/>
    <property type="match status" value="1"/>
</dbReference>
<dbReference type="PANTHER" id="PTHR13822:SF10">
    <property type="entry name" value="ATP SYNTHASE EPSILON CHAIN, CHLOROPLASTIC"/>
    <property type="match status" value="1"/>
</dbReference>
<dbReference type="Pfam" id="PF00401">
    <property type="entry name" value="ATP-synt_DE"/>
    <property type="match status" value="1"/>
</dbReference>
<dbReference type="Pfam" id="PF02823">
    <property type="entry name" value="ATP-synt_DE_N"/>
    <property type="match status" value="1"/>
</dbReference>
<dbReference type="SUPFAM" id="SSF46604">
    <property type="entry name" value="Epsilon subunit of F1F0-ATP synthase C-terminal domain"/>
    <property type="match status" value="1"/>
</dbReference>
<dbReference type="SUPFAM" id="SSF51344">
    <property type="entry name" value="Epsilon subunit of F1F0-ATP synthase N-terminal domain"/>
    <property type="match status" value="1"/>
</dbReference>
<sequence>MAGNILLEVVTPEKIVVSETVQTVTAPGSEGEFGVLVGHTPFLATLKLGTLNFKDETGKVRAVFINGGFAETLPNKVTVLAESAERRCDIDADRCRLALERAQQRLESKENAVDFERAKRALARAQTRMSLAESRKMDGFQ</sequence>
<feature type="chain" id="PRO_1000127847" description="ATP synthase epsilon chain">
    <location>
        <begin position="1"/>
        <end position="141"/>
    </location>
</feature>
<evidence type="ECO:0000255" key="1">
    <source>
        <dbReference type="HAMAP-Rule" id="MF_00530"/>
    </source>
</evidence>
<reference key="1">
    <citation type="journal article" date="2012" name="Environ. Microbiol.">
        <title>The genome sequence of Desulfatibacillum alkenivorans AK-01: a blueprint for anaerobic alkane oxidation.</title>
        <authorList>
            <person name="Callaghan A.V."/>
            <person name="Morris B.E."/>
            <person name="Pereira I.A."/>
            <person name="McInerney M.J."/>
            <person name="Austin R.N."/>
            <person name="Groves J.T."/>
            <person name="Kukor J.J."/>
            <person name="Suflita J.M."/>
            <person name="Young L.Y."/>
            <person name="Zylstra G.J."/>
            <person name="Wawrik B."/>
        </authorList>
    </citation>
    <scope>NUCLEOTIDE SEQUENCE [LARGE SCALE GENOMIC DNA]</scope>
    <source>
        <strain>AK-01</strain>
    </source>
</reference>
<comment type="function">
    <text evidence="1">Produces ATP from ADP in the presence of a proton gradient across the membrane.</text>
</comment>
<comment type="subunit">
    <text evidence="1">F-type ATPases have 2 components, CF(1) - the catalytic core - and CF(0) - the membrane proton channel. CF(1) has five subunits: alpha(3), beta(3), gamma(1), delta(1), epsilon(1). CF(0) has three main subunits: a, b and c.</text>
</comment>
<comment type="subcellular location">
    <subcellularLocation>
        <location evidence="1">Cell inner membrane</location>
        <topology evidence="1">Peripheral membrane protein</topology>
    </subcellularLocation>
</comment>
<comment type="similarity">
    <text evidence="1">Belongs to the ATPase epsilon chain family.</text>
</comment>
<protein>
    <recommendedName>
        <fullName evidence="1">ATP synthase epsilon chain</fullName>
    </recommendedName>
    <alternativeName>
        <fullName evidence="1">ATP synthase F1 sector epsilon subunit</fullName>
    </alternativeName>
    <alternativeName>
        <fullName evidence="1">F-ATPase epsilon subunit</fullName>
    </alternativeName>
</protein>
<proteinExistence type="inferred from homology"/>
<gene>
    <name evidence="1" type="primary">atpC</name>
    <name type="ordered locus">Dalk_3625</name>
</gene>
<keyword id="KW-0066">ATP synthesis</keyword>
<keyword id="KW-0997">Cell inner membrane</keyword>
<keyword id="KW-1003">Cell membrane</keyword>
<keyword id="KW-0139">CF(1)</keyword>
<keyword id="KW-0375">Hydrogen ion transport</keyword>
<keyword id="KW-0406">Ion transport</keyword>
<keyword id="KW-0472">Membrane</keyword>
<keyword id="KW-1185">Reference proteome</keyword>
<keyword id="KW-0813">Transport</keyword>